<feature type="initiator methionine" description="Removed" evidence="1">
    <location>
        <position position="1"/>
    </location>
</feature>
<feature type="chain" id="PRO_0000135405" description="Glutamine--fructose-6-phosphate aminotransferase [isomerizing]">
    <location>
        <begin position="2"/>
        <end position="635"/>
    </location>
</feature>
<feature type="domain" description="Glutamine amidotransferase type-2" evidence="1">
    <location>
        <begin position="2"/>
        <end position="218"/>
    </location>
</feature>
<feature type="domain" description="SIS 1" evidence="1">
    <location>
        <begin position="299"/>
        <end position="439"/>
    </location>
</feature>
<feature type="domain" description="SIS 2" evidence="1">
    <location>
        <begin position="472"/>
        <end position="625"/>
    </location>
</feature>
<feature type="active site" description="Nucleophile; for GATase activity" evidence="1">
    <location>
        <position position="2"/>
    </location>
</feature>
<feature type="active site" description="For Fru-6P isomerization activity" evidence="1">
    <location>
        <position position="630"/>
    </location>
</feature>
<reference key="1">
    <citation type="journal article" date="1998" name="Science">
        <title>Complete genome sequence of Treponema pallidum, the syphilis spirochete.</title>
        <authorList>
            <person name="Fraser C.M."/>
            <person name="Norris S.J."/>
            <person name="Weinstock G.M."/>
            <person name="White O."/>
            <person name="Sutton G.G."/>
            <person name="Dodson R.J."/>
            <person name="Gwinn M.L."/>
            <person name="Hickey E.K."/>
            <person name="Clayton R.A."/>
            <person name="Ketchum K.A."/>
            <person name="Sodergren E."/>
            <person name="Hardham J.M."/>
            <person name="McLeod M.P."/>
            <person name="Salzberg S.L."/>
            <person name="Peterson J.D."/>
            <person name="Khalak H.G."/>
            <person name="Richardson D.L."/>
            <person name="Howell J.K."/>
            <person name="Chidambaram M."/>
            <person name="Utterback T.R."/>
            <person name="McDonald L.A."/>
            <person name="Artiach P."/>
            <person name="Bowman C."/>
            <person name="Cotton M.D."/>
            <person name="Fujii C."/>
            <person name="Garland S.A."/>
            <person name="Hatch B."/>
            <person name="Horst K."/>
            <person name="Roberts K.M."/>
            <person name="Sandusky M."/>
            <person name="Weidman J.F."/>
            <person name="Smith H.O."/>
            <person name="Venter J.C."/>
        </authorList>
    </citation>
    <scope>NUCLEOTIDE SEQUENCE [LARGE SCALE GENOMIC DNA]</scope>
    <source>
        <strain>Nichols</strain>
    </source>
</reference>
<keyword id="KW-0032">Aminotransferase</keyword>
<keyword id="KW-0963">Cytoplasm</keyword>
<keyword id="KW-0315">Glutamine amidotransferase</keyword>
<keyword id="KW-1185">Reference proteome</keyword>
<keyword id="KW-0677">Repeat</keyword>
<keyword id="KW-0808">Transferase</keyword>
<protein>
    <recommendedName>
        <fullName evidence="1">Glutamine--fructose-6-phosphate aminotransferase [isomerizing]</fullName>
        <ecNumber evidence="1">2.6.1.16</ecNumber>
    </recommendedName>
    <alternativeName>
        <fullName evidence="1">D-fructose-6-phosphate amidotransferase</fullName>
    </alternativeName>
    <alternativeName>
        <fullName evidence="1">GFAT</fullName>
    </alternativeName>
    <alternativeName>
        <fullName evidence="1">Glucosamine-6-phosphate synthase</fullName>
    </alternativeName>
    <alternativeName>
        <fullName evidence="1">Hexosephosphate aminotransferase</fullName>
    </alternativeName>
    <alternativeName>
        <fullName evidence="1">L-glutamine--D-fructose-6-phosphate amidotransferase</fullName>
    </alternativeName>
</protein>
<evidence type="ECO:0000255" key="1">
    <source>
        <dbReference type="HAMAP-Rule" id="MF_00164"/>
    </source>
</evidence>
<gene>
    <name evidence="1" type="primary">glmS</name>
    <name type="ordered locus">TP_0861</name>
</gene>
<proteinExistence type="inferred from homology"/>
<dbReference type="EC" id="2.6.1.16" evidence="1"/>
<dbReference type="EMBL" id="AE000520">
    <property type="protein sequence ID" value="AAC65824.1"/>
    <property type="molecule type" value="Genomic_DNA"/>
</dbReference>
<dbReference type="PIR" id="E71272">
    <property type="entry name" value="E71272"/>
</dbReference>
<dbReference type="RefSeq" id="WP_010882305.1">
    <property type="nucleotide sequence ID" value="NC_021490.2"/>
</dbReference>
<dbReference type="SMR" id="O83833"/>
<dbReference type="STRING" id="243276.TP_0861"/>
<dbReference type="EnsemblBacteria" id="AAC65824">
    <property type="protein sequence ID" value="AAC65824"/>
    <property type="gene ID" value="TP_0861"/>
</dbReference>
<dbReference type="GeneID" id="93876617"/>
<dbReference type="KEGG" id="tpa:TP_0861"/>
<dbReference type="KEGG" id="tpw:TPANIC_0861"/>
<dbReference type="eggNOG" id="COG0449">
    <property type="taxonomic scope" value="Bacteria"/>
</dbReference>
<dbReference type="HOGENOM" id="CLU_012520_5_2_12"/>
<dbReference type="OrthoDB" id="106547at2"/>
<dbReference type="Proteomes" id="UP000000811">
    <property type="component" value="Chromosome"/>
</dbReference>
<dbReference type="GO" id="GO:0005829">
    <property type="term" value="C:cytosol"/>
    <property type="evidence" value="ECO:0007669"/>
    <property type="project" value="TreeGrafter"/>
</dbReference>
<dbReference type="GO" id="GO:0097367">
    <property type="term" value="F:carbohydrate derivative binding"/>
    <property type="evidence" value="ECO:0007669"/>
    <property type="project" value="InterPro"/>
</dbReference>
<dbReference type="GO" id="GO:0004360">
    <property type="term" value="F:glutamine-fructose-6-phosphate transaminase (isomerizing) activity"/>
    <property type="evidence" value="ECO:0007669"/>
    <property type="project" value="UniProtKB-UniRule"/>
</dbReference>
<dbReference type="GO" id="GO:0005975">
    <property type="term" value="P:carbohydrate metabolic process"/>
    <property type="evidence" value="ECO:0007669"/>
    <property type="project" value="UniProtKB-UniRule"/>
</dbReference>
<dbReference type="GO" id="GO:0006002">
    <property type="term" value="P:fructose 6-phosphate metabolic process"/>
    <property type="evidence" value="ECO:0007669"/>
    <property type="project" value="TreeGrafter"/>
</dbReference>
<dbReference type="GO" id="GO:0006487">
    <property type="term" value="P:protein N-linked glycosylation"/>
    <property type="evidence" value="ECO:0007669"/>
    <property type="project" value="TreeGrafter"/>
</dbReference>
<dbReference type="GO" id="GO:0006047">
    <property type="term" value="P:UDP-N-acetylglucosamine metabolic process"/>
    <property type="evidence" value="ECO:0007669"/>
    <property type="project" value="TreeGrafter"/>
</dbReference>
<dbReference type="CDD" id="cd00714">
    <property type="entry name" value="GFAT"/>
    <property type="match status" value="1"/>
</dbReference>
<dbReference type="CDD" id="cd05008">
    <property type="entry name" value="SIS_GlmS_GlmD_1"/>
    <property type="match status" value="1"/>
</dbReference>
<dbReference type="CDD" id="cd05009">
    <property type="entry name" value="SIS_GlmS_GlmD_2"/>
    <property type="match status" value="1"/>
</dbReference>
<dbReference type="FunFam" id="3.40.50.10490:FF:000001">
    <property type="entry name" value="Glutamine--fructose-6-phosphate aminotransferase [isomerizing]"/>
    <property type="match status" value="1"/>
</dbReference>
<dbReference type="FunFam" id="3.40.50.10490:FF:000002">
    <property type="entry name" value="Glutamine--fructose-6-phosphate aminotransferase [isomerizing]"/>
    <property type="match status" value="1"/>
</dbReference>
<dbReference type="FunFam" id="3.60.20.10:FF:000006">
    <property type="entry name" value="Glutamine--fructose-6-phosphate aminotransferase [isomerizing]"/>
    <property type="match status" value="1"/>
</dbReference>
<dbReference type="Gene3D" id="3.40.50.10490">
    <property type="entry name" value="Glucose-6-phosphate isomerase like protein, domain 1"/>
    <property type="match status" value="2"/>
</dbReference>
<dbReference type="Gene3D" id="3.60.20.10">
    <property type="entry name" value="Glutamine Phosphoribosylpyrophosphate, subunit 1, domain 1"/>
    <property type="match status" value="1"/>
</dbReference>
<dbReference type="HAMAP" id="MF_00164">
    <property type="entry name" value="GlmS"/>
    <property type="match status" value="1"/>
</dbReference>
<dbReference type="InterPro" id="IPR017932">
    <property type="entry name" value="GATase_2_dom"/>
</dbReference>
<dbReference type="InterPro" id="IPR005855">
    <property type="entry name" value="GFAT"/>
</dbReference>
<dbReference type="InterPro" id="IPR047084">
    <property type="entry name" value="GFAT_N"/>
</dbReference>
<dbReference type="InterPro" id="IPR035466">
    <property type="entry name" value="GlmS/AgaS_SIS"/>
</dbReference>
<dbReference type="InterPro" id="IPR035490">
    <property type="entry name" value="GlmS/FrlB_SIS"/>
</dbReference>
<dbReference type="InterPro" id="IPR029055">
    <property type="entry name" value="Ntn_hydrolases_N"/>
</dbReference>
<dbReference type="InterPro" id="IPR001347">
    <property type="entry name" value="SIS_dom"/>
</dbReference>
<dbReference type="InterPro" id="IPR046348">
    <property type="entry name" value="SIS_dom_sf"/>
</dbReference>
<dbReference type="NCBIfam" id="TIGR01135">
    <property type="entry name" value="glmS"/>
    <property type="match status" value="1"/>
</dbReference>
<dbReference type="NCBIfam" id="NF001484">
    <property type="entry name" value="PRK00331.1"/>
    <property type="match status" value="1"/>
</dbReference>
<dbReference type="PANTHER" id="PTHR10937">
    <property type="entry name" value="GLUCOSAMINE--FRUCTOSE-6-PHOSPHATE AMINOTRANSFERASE, ISOMERIZING"/>
    <property type="match status" value="1"/>
</dbReference>
<dbReference type="PANTHER" id="PTHR10937:SF0">
    <property type="entry name" value="GLUTAMINE--FRUCTOSE-6-PHOSPHATE TRANSAMINASE (ISOMERIZING)"/>
    <property type="match status" value="1"/>
</dbReference>
<dbReference type="Pfam" id="PF13522">
    <property type="entry name" value="GATase_6"/>
    <property type="match status" value="1"/>
</dbReference>
<dbReference type="Pfam" id="PF01380">
    <property type="entry name" value="SIS"/>
    <property type="match status" value="2"/>
</dbReference>
<dbReference type="SUPFAM" id="SSF56235">
    <property type="entry name" value="N-terminal nucleophile aminohydrolases (Ntn hydrolases)"/>
    <property type="match status" value="1"/>
</dbReference>
<dbReference type="SUPFAM" id="SSF53697">
    <property type="entry name" value="SIS domain"/>
    <property type="match status" value="1"/>
</dbReference>
<dbReference type="PROSITE" id="PS51278">
    <property type="entry name" value="GATASE_TYPE_2"/>
    <property type="match status" value="1"/>
</dbReference>
<dbReference type="PROSITE" id="PS51464">
    <property type="entry name" value="SIS"/>
    <property type="match status" value="2"/>
</dbReference>
<name>GLMS_TREPA</name>
<organism>
    <name type="scientific">Treponema pallidum (strain Nichols)</name>
    <dbReference type="NCBI Taxonomy" id="243276"/>
    <lineage>
        <taxon>Bacteria</taxon>
        <taxon>Pseudomonadati</taxon>
        <taxon>Spirochaetota</taxon>
        <taxon>Spirochaetia</taxon>
        <taxon>Spirochaetales</taxon>
        <taxon>Treponemataceae</taxon>
        <taxon>Treponema</taxon>
    </lineage>
</organism>
<comment type="function">
    <text evidence="1">Catalyzes the first step in hexosamine metabolism, converting fructose-6P into glucosamine-6P using glutamine as a nitrogen source.</text>
</comment>
<comment type="catalytic activity">
    <reaction evidence="1">
        <text>D-fructose 6-phosphate + L-glutamine = D-glucosamine 6-phosphate + L-glutamate</text>
        <dbReference type="Rhea" id="RHEA:13237"/>
        <dbReference type="ChEBI" id="CHEBI:29985"/>
        <dbReference type="ChEBI" id="CHEBI:58359"/>
        <dbReference type="ChEBI" id="CHEBI:58725"/>
        <dbReference type="ChEBI" id="CHEBI:61527"/>
        <dbReference type="EC" id="2.6.1.16"/>
    </reaction>
</comment>
<comment type="subunit">
    <text evidence="1">Homodimer.</text>
</comment>
<comment type="subcellular location">
    <subcellularLocation>
        <location evidence="1">Cytoplasm</location>
    </subcellularLocation>
</comment>
<accession>O83833</accession>
<sequence>MCGIVGMVAGRDVSGLLLEGLRRLEYRGYDSAGIAVVGSDCALRLLRCEGRVQSLCALLGQSPLCGTMGIAHTRWATHGKPCAANAHPHCSESVAIVHNGIVENHRSLREMLVTRGYFFHSQTDSEVLAHLLHWELRYTAHLLLAVKKVLTQVRGTYGLLCMDAASPGRLIAARSGSPLAVGLGCGENFVTSDPLALAHVTQRFLYLEEGDIADVHRDSVCVHDAQGNVVARPVVTYQMQLCTQDKGTHRHHMHQEIWQQPHAIRHTLNAYMSFSSSSRAQVRTFGEDRVLDGTSCKTFERLFRRITRVRIIACGTSYHAGLVARYWFEAFAGVGCQVEIASEYRYRTSVVHAREIVLTISQSGETADTIAALRLAKTQGYLCAIAICNGARSTLVRESDAVLLTHAGSEIGVASTKSFTTQLVCLLVLTRMIAQAKKILTQEPEDALSAALQRLPQDVEHVLECEADVARCARHFVHAQHALFLGRGELYPIAIESALKLKEISYIHAEAYAAGELKHGPLALVDAQMPVVAIAPASPGVLFEKMASNIEEVRARGGMLYIFTDVPERFGPVCTPEADAPEGACSQIVTVPSVSPLTAPIFYAVPLQLLAYHIALLKGTDIDQPRNLAKSVTVE</sequence>